<evidence type="ECO:0000250" key="1"/>
<evidence type="ECO:0000255" key="2"/>
<evidence type="ECO:0000255" key="3">
    <source>
        <dbReference type="PROSITE-ProRule" id="PRU01230"/>
    </source>
</evidence>
<evidence type="ECO:0000269" key="4">
    <source>
    </source>
</evidence>
<evidence type="ECO:0000305" key="5"/>
<dbReference type="EMBL" id="U85777">
    <property type="protein sequence ID" value="AAC49726.1"/>
    <property type="molecule type" value="Genomic_DNA"/>
</dbReference>
<dbReference type="EMBL" id="CM003153">
    <property type="protein sequence ID" value="KIS67372.1"/>
    <property type="molecule type" value="Genomic_DNA"/>
</dbReference>
<dbReference type="RefSeq" id="XP_011391146.1">
    <property type="nucleotide sequence ID" value="XM_011392844.1"/>
</dbReference>
<dbReference type="SMR" id="P87034"/>
<dbReference type="FunCoup" id="P87034">
    <property type="interactions" value="114"/>
</dbReference>
<dbReference type="STRING" id="237631.P87034"/>
<dbReference type="EnsemblFungi" id="KIS67372">
    <property type="protein sequence ID" value="KIS67372"/>
    <property type="gene ID" value="UMAG_04474"/>
</dbReference>
<dbReference type="GeneID" id="23564645"/>
<dbReference type="KEGG" id="uma:UMAG_04474"/>
<dbReference type="VEuPathDB" id="FungiDB:UMAG_04474"/>
<dbReference type="eggNOG" id="KOG0082">
    <property type="taxonomic scope" value="Eukaryota"/>
</dbReference>
<dbReference type="HOGENOM" id="CLU_014184_6_0_1"/>
<dbReference type="InParanoid" id="P87034"/>
<dbReference type="OMA" id="ICKPDYM"/>
<dbReference type="OrthoDB" id="5817230at2759"/>
<dbReference type="PHI-base" id="PHI:6077"/>
<dbReference type="PHI-base" id="PHI:78"/>
<dbReference type="Proteomes" id="UP000000561">
    <property type="component" value="Chromosome 14"/>
</dbReference>
<dbReference type="GO" id="GO:0005737">
    <property type="term" value="C:cytoplasm"/>
    <property type="evidence" value="ECO:0000318"/>
    <property type="project" value="GO_Central"/>
</dbReference>
<dbReference type="GO" id="GO:0005834">
    <property type="term" value="C:heterotrimeric G-protein complex"/>
    <property type="evidence" value="ECO:0000318"/>
    <property type="project" value="GO_Central"/>
</dbReference>
<dbReference type="GO" id="GO:0001664">
    <property type="term" value="F:G protein-coupled receptor binding"/>
    <property type="evidence" value="ECO:0000318"/>
    <property type="project" value="GO_Central"/>
</dbReference>
<dbReference type="GO" id="GO:0031683">
    <property type="term" value="F:G-protein beta/gamma-subunit complex binding"/>
    <property type="evidence" value="ECO:0000318"/>
    <property type="project" value="GO_Central"/>
</dbReference>
<dbReference type="GO" id="GO:0005525">
    <property type="term" value="F:GTP binding"/>
    <property type="evidence" value="ECO:0007669"/>
    <property type="project" value="UniProtKB-KW"/>
</dbReference>
<dbReference type="GO" id="GO:0003924">
    <property type="term" value="F:GTPase activity"/>
    <property type="evidence" value="ECO:0000318"/>
    <property type="project" value="GO_Central"/>
</dbReference>
<dbReference type="GO" id="GO:0046872">
    <property type="term" value="F:metal ion binding"/>
    <property type="evidence" value="ECO:0007669"/>
    <property type="project" value="UniProtKB-KW"/>
</dbReference>
<dbReference type="GO" id="GO:0007189">
    <property type="term" value="P:adenylate cyclase-activating G protein-coupled receptor signaling pathway"/>
    <property type="evidence" value="ECO:0000318"/>
    <property type="project" value="GO_Central"/>
</dbReference>
<dbReference type="GO" id="GO:0019236">
    <property type="term" value="P:response to pheromone"/>
    <property type="evidence" value="ECO:0007669"/>
    <property type="project" value="UniProtKB-KW"/>
</dbReference>
<dbReference type="CDD" id="cd00066">
    <property type="entry name" value="G-alpha"/>
    <property type="match status" value="1"/>
</dbReference>
<dbReference type="FunFam" id="1.10.400.10:FF:000007">
    <property type="entry name" value="Guanine nucleotide-binding protein subunit alpha"/>
    <property type="match status" value="1"/>
</dbReference>
<dbReference type="FunFam" id="3.40.50.300:FF:000181">
    <property type="entry name" value="Guanine nucleotide-binding protein subunit alpha"/>
    <property type="match status" value="1"/>
</dbReference>
<dbReference type="FunFam" id="3.40.50.300:FF:000692">
    <property type="entry name" value="Guanine nucleotide-binding protein subunit alpha"/>
    <property type="match status" value="1"/>
</dbReference>
<dbReference type="Gene3D" id="1.10.400.10">
    <property type="entry name" value="GI Alpha 1, domain 2-like"/>
    <property type="match status" value="1"/>
</dbReference>
<dbReference type="Gene3D" id="3.40.50.300">
    <property type="entry name" value="P-loop containing nucleotide triphosphate hydrolases"/>
    <property type="match status" value="1"/>
</dbReference>
<dbReference type="InterPro" id="IPR002975">
    <property type="entry name" value="Fungi_Gprotein_alpha"/>
</dbReference>
<dbReference type="InterPro" id="IPR001019">
    <property type="entry name" value="Gprotein_alpha_su"/>
</dbReference>
<dbReference type="InterPro" id="IPR011025">
    <property type="entry name" value="GproteinA_insert"/>
</dbReference>
<dbReference type="InterPro" id="IPR027417">
    <property type="entry name" value="P-loop_NTPase"/>
</dbReference>
<dbReference type="PANTHER" id="PTHR10218">
    <property type="entry name" value="GTP-BINDING PROTEIN ALPHA SUBUNIT"/>
    <property type="match status" value="1"/>
</dbReference>
<dbReference type="PANTHER" id="PTHR10218:SF369">
    <property type="entry name" value="GUANINE NUCLEOTIDE-BINDING PROTEIN ALPHA-2 SUBUNIT"/>
    <property type="match status" value="1"/>
</dbReference>
<dbReference type="Pfam" id="PF00503">
    <property type="entry name" value="G-alpha"/>
    <property type="match status" value="1"/>
</dbReference>
<dbReference type="PRINTS" id="PR00318">
    <property type="entry name" value="GPROTEINA"/>
</dbReference>
<dbReference type="PRINTS" id="PR01241">
    <property type="entry name" value="GPROTEINAFNG"/>
</dbReference>
<dbReference type="SMART" id="SM00275">
    <property type="entry name" value="G_alpha"/>
    <property type="match status" value="1"/>
</dbReference>
<dbReference type="SUPFAM" id="SSF52540">
    <property type="entry name" value="P-loop containing nucleoside triphosphate hydrolases"/>
    <property type="match status" value="1"/>
</dbReference>
<dbReference type="SUPFAM" id="SSF47895">
    <property type="entry name" value="Transducin (alpha subunit), insertion domain"/>
    <property type="match status" value="1"/>
</dbReference>
<dbReference type="PROSITE" id="PS51882">
    <property type="entry name" value="G_ALPHA"/>
    <property type="match status" value="1"/>
</dbReference>
<protein>
    <recommendedName>
        <fullName>Guanine nucleotide-binding protein alpha-3 subunit</fullName>
    </recommendedName>
</protein>
<reference key="1">
    <citation type="journal article" date="1997" name="EMBO J.">
        <title>G proteins in Ustilago maydis: transmission of multiple signals?</title>
        <authorList>
            <person name="Regenfelder E."/>
            <person name="Spellig T."/>
            <person name="Hartmann A."/>
            <person name="Lauenstein S."/>
            <person name="Boelker M."/>
            <person name="Kahmann R."/>
        </authorList>
    </citation>
    <scope>NUCLEOTIDE SEQUENCE [GENOMIC DNA]</scope>
    <scope>MUTAGENESIS OF GLN-206</scope>
    <source>
        <strain>FB1</strain>
    </source>
</reference>
<reference key="2">
    <citation type="journal article" date="2006" name="Nature">
        <title>Insights from the genome of the biotrophic fungal plant pathogen Ustilago maydis.</title>
        <authorList>
            <person name="Kaemper J."/>
            <person name="Kahmann R."/>
            <person name="Boelker M."/>
            <person name="Ma L.-J."/>
            <person name="Brefort T."/>
            <person name="Saville B.J."/>
            <person name="Banuett F."/>
            <person name="Kronstad J.W."/>
            <person name="Gold S.E."/>
            <person name="Mueller O."/>
            <person name="Perlin M.H."/>
            <person name="Woesten H.A.B."/>
            <person name="de Vries R."/>
            <person name="Ruiz-Herrera J."/>
            <person name="Reynaga-Pena C.G."/>
            <person name="Snetselaar K."/>
            <person name="McCann M."/>
            <person name="Perez-Martin J."/>
            <person name="Feldbruegge M."/>
            <person name="Basse C.W."/>
            <person name="Steinberg G."/>
            <person name="Ibeas J.I."/>
            <person name="Holloman W."/>
            <person name="Guzman P."/>
            <person name="Farman M.L."/>
            <person name="Stajich J.E."/>
            <person name="Sentandreu R."/>
            <person name="Gonzalez-Prieto J.M."/>
            <person name="Kennell J.C."/>
            <person name="Molina L."/>
            <person name="Schirawski J."/>
            <person name="Mendoza-Mendoza A."/>
            <person name="Greilinger D."/>
            <person name="Muench K."/>
            <person name="Roessel N."/>
            <person name="Scherer M."/>
            <person name="Vranes M."/>
            <person name="Ladendorf O."/>
            <person name="Vincon V."/>
            <person name="Fuchs U."/>
            <person name="Sandrock B."/>
            <person name="Meng S."/>
            <person name="Ho E.C.H."/>
            <person name="Cahill M.J."/>
            <person name="Boyce K.J."/>
            <person name="Klose J."/>
            <person name="Klosterman S.J."/>
            <person name="Deelstra H.J."/>
            <person name="Ortiz-Castellanos L."/>
            <person name="Li W."/>
            <person name="Sanchez-Alonso P."/>
            <person name="Schreier P.H."/>
            <person name="Haeuser-Hahn I."/>
            <person name="Vaupel M."/>
            <person name="Koopmann E."/>
            <person name="Friedrich G."/>
            <person name="Voss H."/>
            <person name="Schlueter T."/>
            <person name="Margolis J."/>
            <person name="Platt D."/>
            <person name="Swimmer C."/>
            <person name="Gnirke A."/>
            <person name="Chen F."/>
            <person name="Vysotskaia V."/>
            <person name="Mannhaupt G."/>
            <person name="Gueldener U."/>
            <person name="Muensterkoetter M."/>
            <person name="Haase D."/>
            <person name="Oesterheld M."/>
            <person name="Mewes H.-W."/>
            <person name="Mauceli E.W."/>
            <person name="DeCaprio D."/>
            <person name="Wade C.M."/>
            <person name="Butler J."/>
            <person name="Young S.K."/>
            <person name="Jaffe D.B."/>
            <person name="Calvo S.E."/>
            <person name="Nusbaum C."/>
            <person name="Galagan J.E."/>
            <person name="Birren B.W."/>
        </authorList>
    </citation>
    <scope>NUCLEOTIDE SEQUENCE [LARGE SCALE GENOMIC DNA]</scope>
    <source>
        <strain>DSM 14603 / FGSC 9021 / UM521</strain>
    </source>
</reference>
<reference key="3">
    <citation type="submission" date="2014-09" db="EMBL/GenBank/DDBJ databases">
        <authorList>
            <person name="Gueldener U."/>
            <person name="Muensterkoetter M."/>
            <person name="Walter M.C."/>
            <person name="Mannhaupt G."/>
            <person name="Kahmann R."/>
        </authorList>
    </citation>
    <scope>GENOME REANNOTATION</scope>
    <source>
        <strain>DSM 14603 / FGSC 9021 / UM521</strain>
    </source>
</reference>
<proteinExistence type="evidence at protein level"/>
<organism>
    <name type="scientific">Mycosarcoma maydis</name>
    <name type="common">Corn smut fungus</name>
    <name type="synonym">Ustilago maydis</name>
    <dbReference type="NCBI Taxonomy" id="5270"/>
    <lineage>
        <taxon>Eukaryota</taxon>
        <taxon>Fungi</taxon>
        <taxon>Dikarya</taxon>
        <taxon>Basidiomycota</taxon>
        <taxon>Ustilaginomycotina</taxon>
        <taxon>Ustilaginomycetes</taxon>
        <taxon>Ustilaginales</taxon>
        <taxon>Ustilaginaceae</taxon>
        <taxon>Mycosarcoma</taxon>
    </lineage>
</organism>
<sequence length="354" mass="40385">MGNCLSSSDQKEAKDRSVAIDKQIEEDSRKFKKECKILLLGSGESGKSTIVKQMKIIHQNGYTKDELLLYRLTVIKNLVDSAQAMVLALRKFKMEPEMPENRENVDAILQYRVDADPGATLDHAMARKVDSLWKDPIVPAIMERSSEFYLMDSAAYFFDNVNRIGQSDYVPNENDVLRARSKTTGISETRFNMGQLSIHLFDVGGQRSERKKWIHCFEAVTSIIFCVALSEYDQVLLEESGQNRMAESLVLFESVVNSRWFLRTSVILFLNKIDIFKQKIPKQPLSKYFPEYSGGPDINKAAKYILWRFTQTNRARLSIYPHLTQATDTSNIRLVFAAVKETILTNALKDSGIL</sequence>
<accession>P87034</accession>
<accession>A0A0D1C0C0</accession>
<accession>Q4P5Y9</accession>
<gene>
    <name type="primary">GPA3</name>
    <name type="ORF">UMAG_04474</name>
</gene>
<comment type="function">
    <text>Guanine nucleotide-binding proteins (G proteins) are involved as modulators or transducers in various transmembrane signaling systems. GPA3 plays an active role in transmission of the pheromone signal.</text>
</comment>
<comment type="subunit">
    <text>G proteins are composed of 3 units; alpha, beta and gamma. The alpha chain contains the guanine nucleotide binding site.</text>
</comment>
<comment type="similarity">
    <text evidence="5">Belongs to the G-alpha family.</text>
</comment>
<name>GPA3_MYCMD</name>
<feature type="initiator methionine" description="Removed" evidence="2">
    <location>
        <position position="1"/>
    </location>
</feature>
<feature type="chain" id="PRO_0000203614" description="Guanine nucleotide-binding protein alpha-3 subunit">
    <location>
        <begin position="2"/>
        <end position="354"/>
    </location>
</feature>
<feature type="domain" description="G-alpha" evidence="3">
    <location>
        <begin position="33"/>
        <end position="354"/>
    </location>
</feature>
<feature type="region of interest" description="G1 motif" evidence="3">
    <location>
        <begin position="36"/>
        <end position="49"/>
    </location>
</feature>
<feature type="region of interest" description="G2 motif" evidence="3">
    <location>
        <begin position="175"/>
        <end position="183"/>
    </location>
</feature>
<feature type="region of interest" description="G3 motif" evidence="3">
    <location>
        <begin position="198"/>
        <end position="207"/>
    </location>
</feature>
<feature type="region of interest" description="G4 motif" evidence="3">
    <location>
        <begin position="267"/>
        <end position="274"/>
    </location>
</feature>
<feature type="region of interest" description="G5 motif" evidence="3">
    <location>
        <begin position="324"/>
        <end position="329"/>
    </location>
</feature>
<feature type="binding site" evidence="1">
    <location>
        <begin position="41"/>
        <end position="48"/>
    </location>
    <ligand>
        <name>GTP</name>
        <dbReference type="ChEBI" id="CHEBI:37565"/>
    </ligand>
</feature>
<feature type="binding site" evidence="1">
    <location>
        <position position="48"/>
    </location>
    <ligand>
        <name>Mg(2+)</name>
        <dbReference type="ChEBI" id="CHEBI:18420"/>
    </ligand>
</feature>
<feature type="binding site" evidence="1">
    <location>
        <begin position="177"/>
        <end position="183"/>
    </location>
    <ligand>
        <name>GTP</name>
        <dbReference type="ChEBI" id="CHEBI:37565"/>
    </ligand>
</feature>
<feature type="binding site" evidence="1">
    <location>
        <position position="183"/>
    </location>
    <ligand>
        <name>Mg(2+)</name>
        <dbReference type="ChEBI" id="CHEBI:18420"/>
    </ligand>
</feature>
<feature type="binding site" evidence="1">
    <location>
        <begin position="202"/>
        <end position="206"/>
    </location>
    <ligand>
        <name>GTP</name>
        <dbReference type="ChEBI" id="CHEBI:37565"/>
    </ligand>
</feature>
<feature type="binding site" evidence="1">
    <location>
        <begin position="271"/>
        <end position="274"/>
    </location>
    <ligand>
        <name>GTP</name>
        <dbReference type="ChEBI" id="CHEBI:37565"/>
    </ligand>
</feature>
<feature type="binding site" evidence="1">
    <location>
        <position position="326"/>
    </location>
    <ligand>
        <name>GTP</name>
        <dbReference type="ChEBI" id="CHEBI:37565"/>
    </ligand>
</feature>
<feature type="lipid moiety-binding region" description="N-myristoyl glycine" evidence="2">
    <location>
        <position position="2"/>
    </location>
</feature>
<feature type="lipid moiety-binding region" description="S-palmitoyl cysteine" evidence="2">
    <location>
        <position position="4"/>
    </location>
</feature>
<feature type="mutagenesis site" description="Constitutively active." evidence="4">
    <original>Q</original>
    <variation>L</variation>
    <location>
        <position position="206"/>
    </location>
</feature>
<keyword id="KW-0342">GTP-binding</keyword>
<keyword id="KW-0449">Lipoprotein</keyword>
<keyword id="KW-0460">Magnesium</keyword>
<keyword id="KW-0479">Metal-binding</keyword>
<keyword id="KW-0519">Myristate</keyword>
<keyword id="KW-0547">Nucleotide-binding</keyword>
<keyword id="KW-0564">Palmitate</keyword>
<keyword id="KW-0589">Pheromone response</keyword>
<keyword id="KW-1185">Reference proteome</keyword>
<keyword id="KW-0807">Transducer</keyword>